<sequence length="135" mass="14289">MRSSSLPGARSPRRNGSGQSRHRLPPGRLRTGSRAPTAEARPHVARSPPTPGTGARGGGRRGWGGSRAAPQRGSCASANAQKQLRQTAATYMLTARGGSRSAERKGDLQRTFRQVGQTMPMVPPLDFTMNAASVE</sequence>
<name>M14OS_HUMAN</name>
<organism>
    <name type="scientific">Homo sapiens</name>
    <name type="common">Human</name>
    <dbReference type="NCBI Taxonomy" id="9606"/>
    <lineage>
        <taxon>Eukaryota</taxon>
        <taxon>Metazoa</taxon>
        <taxon>Chordata</taxon>
        <taxon>Craniata</taxon>
        <taxon>Vertebrata</taxon>
        <taxon>Euteleostomi</taxon>
        <taxon>Mammalia</taxon>
        <taxon>Eutheria</taxon>
        <taxon>Euarchontoglires</taxon>
        <taxon>Primates</taxon>
        <taxon>Haplorrhini</taxon>
        <taxon>Catarrhini</taxon>
        <taxon>Hominidae</taxon>
        <taxon>Homo</taxon>
    </lineage>
</organism>
<evidence type="ECO:0000256" key="1">
    <source>
        <dbReference type="SAM" id="MobiDB-lite"/>
    </source>
</evidence>
<evidence type="ECO:0000305" key="2"/>
<evidence type="ECO:0000312" key="3">
    <source>
        <dbReference type="HGNC" id="HGNC:40162"/>
    </source>
</evidence>
<accession>P0DP75</accession>
<reference key="1">
    <citation type="journal article" date="2005" name="Nature">
        <title>The DNA sequence of the human X chromosome.</title>
        <authorList>
            <person name="Ross M.T."/>
            <person name="Grafham D.V."/>
            <person name="Coffey A.J."/>
            <person name="Scherer S."/>
            <person name="McLay K."/>
            <person name="Muzny D."/>
            <person name="Platzer M."/>
            <person name="Howell G.R."/>
            <person name="Burrows C."/>
            <person name="Bird C.P."/>
            <person name="Frankish A."/>
            <person name="Lovell F.L."/>
            <person name="Howe K.L."/>
            <person name="Ashurst J.L."/>
            <person name="Fulton R.S."/>
            <person name="Sudbrak R."/>
            <person name="Wen G."/>
            <person name="Jones M.C."/>
            <person name="Hurles M.E."/>
            <person name="Andrews T.D."/>
            <person name="Scott C.E."/>
            <person name="Searle S."/>
            <person name="Ramser J."/>
            <person name="Whittaker A."/>
            <person name="Deadman R."/>
            <person name="Carter N.P."/>
            <person name="Hunt S.E."/>
            <person name="Chen R."/>
            <person name="Cree A."/>
            <person name="Gunaratne P."/>
            <person name="Havlak P."/>
            <person name="Hodgson A."/>
            <person name="Metzker M.L."/>
            <person name="Richards S."/>
            <person name="Scott G."/>
            <person name="Steffen D."/>
            <person name="Sodergren E."/>
            <person name="Wheeler D.A."/>
            <person name="Worley K.C."/>
            <person name="Ainscough R."/>
            <person name="Ambrose K.D."/>
            <person name="Ansari-Lari M.A."/>
            <person name="Aradhya S."/>
            <person name="Ashwell R.I."/>
            <person name="Babbage A.K."/>
            <person name="Bagguley C.L."/>
            <person name="Ballabio A."/>
            <person name="Banerjee R."/>
            <person name="Barker G.E."/>
            <person name="Barlow K.F."/>
            <person name="Barrett I.P."/>
            <person name="Bates K.N."/>
            <person name="Beare D.M."/>
            <person name="Beasley H."/>
            <person name="Beasley O."/>
            <person name="Beck A."/>
            <person name="Bethel G."/>
            <person name="Blechschmidt K."/>
            <person name="Brady N."/>
            <person name="Bray-Allen S."/>
            <person name="Bridgeman A.M."/>
            <person name="Brown A.J."/>
            <person name="Brown M.J."/>
            <person name="Bonnin D."/>
            <person name="Bruford E.A."/>
            <person name="Buhay C."/>
            <person name="Burch P."/>
            <person name="Burford D."/>
            <person name="Burgess J."/>
            <person name="Burrill W."/>
            <person name="Burton J."/>
            <person name="Bye J.M."/>
            <person name="Carder C."/>
            <person name="Carrel L."/>
            <person name="Chako J."/>
            <person name="Chapman J.C."/>
            <person name="Chavez D."/>
            <person name="Chen E."/>
            <person name="Chen G."/>
            <person name="Chen Y."/>
            <person name="Chen Z."/>
            <person name="Chinault C."/>
            <person name="Ciccodicola A."/>
            <person name="Clark S.Y."/>
            <person name="Clarke G."/>
            <person name="Clee C.M."/>
            <person name="Clegg S."/>
            <person name="Clerc-Blankenburg K."/>
            <person name="Clifford K."/>
            <person name="Cobley V."/>
            <person name="Cole C.G."/>
            <person name="Conquer J.S."/>
            <person name="Corby N."/>
            <person name="Connor R.E."/>
            <person name="David R."/>
            <person name="Davies J."/>
            <person name="Davis C."/>
            <person name="Davis J."/>
            <person name="Delgado O."/>
            <person name="Deshazo D."/>
            <person name="Dhami P."/>
            <person name="Ding Y."/>
            <person name="Dinh H."/>
            <person name="Dodsworth S."/>
            <person name="Draper H."/>
            <person name="Dugan-Rocha S."/>
            <person name="Dunham A."/>
            <person name="Dunn M."/>
            <person name="Durbin K.J."/>
            <person name="Dutta I."/>
            <person name="Eades T."/>
            <person name="Ellwood M."/>
            <person name="Emery-Cohen A."/>
            <person name="Errington H."/>
            <person name="Evans K.L."/>
            <person name="Faulkner L."/>
            <person name="Francis F."/>
            <person name="Frankland J."/>
            <person name="Fraser A.E."/>
            <person name="Galgoczy P."/>
            <person name="Gilbert J."/>
            <person name="Gill R."/>
            <person name="Gloeckner G."/>
            <person name="Gregory S.G."/>
            <person name="Gribble S."/>
            <person name="Griffiths C."/>
            <person name="Grocock R."/>
            <person name="Gu Y."/>
            <person name="Gwilliam R."/>
            <person name="Hamilton C."/>
            <person name="Hart E.A."/>
            <person name="Hawes A."/>
            <person name="Heath P.D."/>
            <person name="Heitmann K."/>
            <person name="Hennig S."/>
            <person name="Hernandez J."/>
            <person name="Hinzmann B."/>
            <person name="Ho S."/>
            <person name="Hoffs M."/>
            <person name="Howden P.J."/>
            <person name="Huckle E.J."/>
            <person name="Hume J."/>
            <person name="Hunt P.J."/>
            <person name="Hunt A.R."/>
            <person name="Isherwood J."/>
            <person name="Jacob L."/>
            <person name="Johnson D."/>
            <person name="Jones S."/>
            <person name="de Jong P.J."/>
            <person name="Joseph S.S."/>
            <person name="Keenan S."/>
            <person name="Kelly S."/>
            <person name="Kershaw J.K."/>
            <person name="Khan Z."/>
            <person name="Kioschis P."/>
            <person name="Klages S."/>
            <person name="Knights A.J."/>
            <person name="Kosiura A."/>
            <person name="Kovar-Smith C."/>
            <person name="Laird G.K."/>
            <person name="Langford C."/>
            <person name="Lawlor S."/>
            <person name="Leversha M."/>
            <person name="Lewis L."/>
            <person name="Liu W."/>
            <person name="Lloyd C."/>
            <person name="Lloyd D.M."/>
            <person name="Loulseged H."/>
            <person name="Loveland J.E."/>
            <person name="Lovell J.D."/>
            <person name="Lozado R."/>
            <person name="Lu J."/>
            <person name="Lyne R."/>
            <person name="Ma J."/>
            <person name="Maheshwari M."/>
            <person name="Matthews L.H."/>
            <person name="McDowall J."/>
            <person name="McLaren S."/>
            <person name="McMurray A."/>
            <person name="Meidl P."/>
            <person name="Meitinger T."/>
            <person name="Milne S."/>
            <person name="Miner G."/>
            <person name="Mistry S.L."/>
            <person name="Morgan M."/>
            <person name="Morris S."/>
            <person name="Mueller I."/>
            <person name="Mullikin J.C."/>
            <person name="Nguyen N."/>
            <person name="Nordsiek G."/>
            <person name="Nyakatura G."/>
            <person name="O'dell C.N."/>
            <person name="Okwuonu G."/>
            <person name="Palmer S."/>
            <person name="Pandian R."/>
            <person name="Parker D."/>
            <person name="Parrish J."/>
            <person name="Pasternak S."/>
            <person name="Patel D."/>
            <person name="Pearce A.V."/>
            <person name="Pearson D.M."/>
            <person name="Pelan S.E."/>
            <person name="Perez L."/>
            <person name="Porter K.M."/>
            <person name="Ramsey Y."/>
            <person name="Reichwald K."/>
            <person name="Rhodes S."/>
            <person name="Ridler K.A."/>
            <person name="Schlessinger D."/>
            <person name="Schueler M.G."/>
            <person name="Sehra H.K."/>
            <person name="Shaw-Smith C."/>
            <person name="Shen H."/>
            <person name="Sheridan E.M."/>
            <person name="Shownkeen R."/>
            <person name="Skuce C.D."/>
            <person name="Smith M.L."/>
            <person name="Sotheran E.C."/>
            <person name="Steingruber H.E."/>
            <person name="Steward C.A."/>
            <person name="Storey R."/>
            <person name="Swann R.M."/>
            <person name="Swarbreck D."/>
            <person name="Tabor P.E."/>
            <person name="Taudien S."/>
            <person name="Taylor T."/>
            <person name="Teague B."/>
            <person name="Thomas K."/>
            <person name="Thorpe A."/>
            <person name="Timms K."/>
            <person name="Tracey A."/>
            <person name="Trevanion S."/>
            <person name="Tromans A.C."/>
            <person name="d'Urso M."/>
            <person name="Verduzco D."/>
            <person name="Villasana D."/>
            <person name="Waldron L."/>
            <person name="Wall M."/>
            <person name="Wang Q."/>
            <person name="Warren J."/>
            <person name="Warry G.L."/>
            <person name="Wei X."/>
            <person name="West A."/>
            <person name="Whitehead S.L."/>
            <person name="Whiteley M.N."/>
            <person name="Wilkinson J.E."/>
            <person name="Willey D.L."/>
            <person name="Williams G."/>
            <person name="Williams L."/>
            <person name="Williamson A."/>
            <person name="Williamson H."/>
            <person name="Wilming L."/>
            <person name="Woodmansey R.L."/>
            <person name="Wray P.W."/>
            <person name="Yen J."/>
            <person name="Zhang J."/>
            <person name="Zhou J."/>
            <person name="Zoghbi H."/>
            <person name="Zorilla S."/>
            <person name="Buck D."/>
            <person name="Reinhardt R."/>
            <person name="Poustka A."/>
            <person name="Rosenthal A."/>
            <person name="Lehrach H."/>
            <person name="Meindl A."/>
            <person name="Minx P.J."/>
            <person name="Hillier L.W."/>
            <person name="Willard H.F."/>
            <person name="Wilson R.K."/>
            <person name="Waterston R.H."/>
            <person name="Rice C.M."/>
            <person name="Vaudin M."/>
            <person name="Coulson A."/>
            <person name="Nelson D.L."/>
            <person name="Weinstock G."/>
            <person name="Sulston J.E."/>
            <person name="Durbin R.M."/>
            <person name="Hubbard T."/>
            <person name="Gibbs R.A."/>
            <person name="Beck S."/>
            <person name="Rogers J."/>
            <person name="Bentley D.R."/>
        </authorList>
    </citation>
    <scope>NUCLEOTIDE SEQUENCE [LARGE SCALE GENOMIC DNA]</scope>
</reference>
<reference key="2">
    <citation type="journal article" date="2004" name="Genome Res.">
        <title>The status, quality, and expansion of the NIH full-length cDNA project: the Mammalian Gene Collection (MGC).</title>
        <authorList>
            <consortium name="The MGC Project Team"/>
        </authorList>
    </citation>
    <scope>NUCLEOTIDE SEQUENCE [LARGE SCALE MRNA]</scope>
</reference>
<feature type="chain" id="PRO_0000440970" description="Putative uncharacterized protein MED14OS">
    <location>
        <begin position="1"/>
        <end position="135"/>
    </location>
</feature>
<feature type="region of interest" description="Disordered" evidence="1">
    <location>
        <begin position="1"/>
        <end position="80"/>
    </location>
</feature>
<feature type="compositionally biased region" description="Gly residues" evidence="1">
    <location>
        <begin position="54"/>
        <end position="65"/>
    </location>
</feature>
<gene>
    <name evidence="3" type="primary">MED14OS</name>
    <name evidence="3" type="synonym">MED14-AS1</name>
</gene>
<comment type="caution">
    <text evidence="2">Product of a dubious CDS prediction. Overlaps in opposite strand with MED14.</text>
</comment>
<dbReference type="EMBL" id="AC092474">
    <property type="status" value="NOT_ANNOTATED_CDS"/>
    <property type="molecule type" value="Genomic_DNA"/>
</dbReference>
<dbReference type="EMBL" id="BC039399">
    <property type="status" value="NOT_ANNOTATED_CDS"/>
    <property type="molecule type" value="mRNA"/>
</dbReference>
<dbReference type="RefSeq" id="NP_001276702.1">
    <property type="nucleotide sequence ID" value="NM_001289773.1"/>
</dbReference>
<dbReference type="GlyGen" id="P0DP75">
    <property type="glycosylation" value="2 sites, 1 O-linked glycan (1 site)"/>
</dbReference>
<dbReference type="BioMuta" id="MED14OS"/>
<dbReference type="DNASU" id="100873985"/>
<dbReference type="AGR" id="HGNC:40162"/>
<dbReference type="GeneCards" id="MED14OS"/>
<dbReference type="HGNC" id="HGNC:40162">
    <property type="gene designation" value="MED14OS"/>
</dbReference>
<dbReference type="neXtProt" id="NX_P0DP75"/>
<dbReference type="InParanoid" id="P0DP75"/>
<dbReference type="PAN-GO" id="P0DP75">
    <property type="GO annotations" value="0 GO annotations based on evolutionary models"/>
</dbReference>
<dbReference type="PathwayCommons" id="P0DP75"/>
<dbReference type="GenomeRNAi" id="100873985"/>
<dbReference type="Pharos" id="P0DP75">
    <property type="development level" value="Tdark"/>
</dbReference>
<dbReference type="Proteomes" id="UP000005640">
    <property type="component" value="Unplaced"/>
</dbReference>
<dbReference type="RNAct" id="P0DP75">
    <property type="molecule type" value="protein"/>
</dbReference>
<protein>
    <recommendedName>
        <fullName evidence="2">Putative uncharacterized protein MED14OS</fullName>
    </recommendedName>
    <alternativeName>
        <fullName evidence="2">MED14 antisense gene protein 1</fullName>
    </alternativeName>
    <alternativeName>
        <fullName evidence="3">MED14 opposite strand protein</fullName>
    </alternativeName>
</protein>
<keyword id="KW-1185">Reference proteome</keyword>
<proteinExistence type="uncertain"/>